<name>PLR1_ARATH</name>
<dbReference type="EC" id="1.1.1.65"/>
<dbReference type="EMBL" id="AB015476">
    <property type="protein sequence ID" value="BAB09734.1"/>
    <property type="status" value="ALT_SEQ"/>
    <property type="molecule type" value="Genomic_DNA"/>
</dbReference>
<dbReference type="EMBL" id="CP002688">
    <property type="protein sequence ID" value="AED96380.1"/>
    <property type="molecule type" value="Genomic_DNA"/>
</dbReference>
<dbReference type="EMBL" id="BT012653">
    <property type="protein sequence ID" value="AAT06472.1"/>
    <property type="molecule type" value="mRNA"/>
</dbReference>
<dbReference type="EMBL" id="AK221481">
    <property type="protein sequence ID" value="BAD94642.1"/>
    <property type="molecule type" value="mRNA"/>
</dbReference>
<dbReference type="RefSeq" id="NP_200170.2">
    <property type="nucleotide sequence ID" value="NM_124738.4"/>
</dbReference>
<dbReference type="SMR" id="Q56Y42"/>
<dbReference type="FunCoup" id="Q56Y42">
    <property type="interactions" value="994"/>
</dbReference>
<dbReference type="STRING" id="3702.Q56Y42"/>
<dbReference type="PaxDb" id="3702-AT5G53580.1"/>
<dbReference type="ProteomicsDB" id="236634"/>
<dbReference type="EnsemblPlants" id="AT5G53580.1">
    <property type="protein sequence ID" value="AT5G53580.1"/>
    <property type="gene ID" value="AT5G53580"/>
</dbReference>
<dbReference type="GeneID" id="835440"/>
<dbReference type="Gramene" id="AT5G53580.1">
    <property type="protein sequence ID" value="AT5G53580.1"/>
    <property type="gene ID" value="AT5G53580"/>
</dbReference>
<dbReference type="KEGG" id="ath:AT5G53580"/>
<dbReference type="Araport" id="AT5G53580"/>
<dbReference type="TAIR" id="AT5G53580">
    <property type="gene designation" value="PLR1"/>
</dbReference>
<dbReference type="eggNOG" id="KOG1575">
    <property type="taxonomic scope" value="Eukaryota"/>
</dbReference>
<dbReference type="HOGENOM" id="CLU_023205_2_3_1"/>
<dbReference type="InParanoid" id="Q56Y42"/>
<dbReference type="OMA" id="CGTWAWG"/>
<dbReference type="PhylomeDB" id="Q56Y42"/>
<dbReference type="BioCyc" id="ARA:AT5G53580-MONOMER"/>
<dbReference type="BioCyc" id="MetaCyc:MONOMER-17899"/>
<dbReference type="UniPathway" id="UPA00192">
    <property type="reaction ID" value="UER00307"/>
</dbReference>
<dbReference type="PRO" id="PR:Q56Y42"/>
<dbReference type="Proteomes" id="UP000006548">
    <property type="component" value="Chromosome 5"/>
</dbReference>
<dbReference type="ExpressionAtlas" id="Q56Y42">
    <property type="expression patterns" value="baseline and differential"/>
</dbReference>
<dbReference type="GO" id="GO:0009507">
    <property type="term" value="C:chloroplast"/>
    <property type="evidence" value="ECO:0007005"/>
    <property type="project" value="TAIR"/>
</dbReference>
<dbReference type="GO" id="GO:0009536">
    <property type="term" value="C:plastid"/>
    <property type="evidence" value="ECO:0007005"/>
    <property type="project" value="TAIR"/>
</dbReference>
<dbReference type="GO" id="GO:0070402">
    <property type="term" value="F:NADPH binding"/>
    <property type="evidence" value="ECO:0000314"/>
    <property type="project" value="UniProtKB"/>
</dbReference>
<dbReference type="GO" id="GO:0050236">
    <property type="term" value="F:pyridoxine:NADP 4-dehydrogenase activity"/>
    <property type="evidence" value="ECO:0000314"/>
    <property type="project" value="UniProtKB"/>
</dbReference>
<dbReference type="GO" id="GO:0009443">
    <property type="term" value="P:pyridoxal 5'-phosphate salvage"/>
    <property type="evidence" value="ECO:0000314"/>
    <property type="project" value="UniProtKB"/>
</dbReference>
<dbReference type="GO" id="GO:0042821">
    <property type="term" value="P:pyridoxal biosynthetic process"/>
    <property type="evidence" value="ECO:0000314"/>
    <property type="project" value="UniProtKB"/>
</dbReference>
<dbReference type="GO" id="GO:0042820">
    <property type="term" value="P:vitamin B6 catabolic process"/>
    <property type="evidence" value="ECO:0007669"/>
    <property type="project" value="UniProtKB-UniPathway"/>
</dbReference>
<dbReference type="CDD" id="cd19093">
    <property type="entry name" value="AKR_AtPLR-like"/>
    <property type="match status" value="1"/>
</dbReference>
<dbReference type="FunFam" id="3.20.20.100:FF:000043">
    <property type="entry name" value="Pyridoxal reductase, chloroplastic"/>
    <property type="match status" value="1"/>
</dbReference>
<dbReference type="Gene3D" id="3.20.20.100">
    <property type="entry name" value="NADP-dependent oxidoreductase domain"/>
    <property type="match status" value="1"/>
</dbReference>
<dbReference type="InterPro" id="IPR020471">
    <property type="entry name" value="AKR"/>
</dbReference>
<dbReference type="InterPro" id="IPR050791">
    <property type="entry name" value="Aldo-Keto_reductase"/>
</dbReference>
<dbReference type="InterPro" id="IPR018170">
    <property type="entry name" value="Aldo/ket_reductase_CS"/>
</dbReference>
<dbReference type="InterPro" id="IPR023210">
    <property type="entry name" value="NADP_OxRdtase_dom"/>
</dbReference>
<dbReference type="InterPro" id="IPR036812">
    <property type="entry name" value="NADP_OxRdtase_dom_sf"/>
</dbReference>
<dbReference type="PANTHER" id="PTHR43625">
    <property type="entry name" value="AFLATOXIN B1 ALDEHYDE REDUCTASE"/>
    <property type="match status" value="1"/>
</dbReference>
<dbReference type="PANTHER" id="PTHR43625:SF5">
    <property type="entry name" value="PYRIDOXAL REDUCTASE, CHLOROPLASTIC"/>
    <property type="match status" value="1"/>
</dbReference>
<dbReference type="Pfam" id="PF00248">
    <property type="entry name" value="Aldo_ket_red"/>
    <property type="match status" value="1"/>
</dbReference>
<dbReference type="PRINTS" id="PR00069">
    <property type="entry name" value="ALDKETRDTASE"/>
</dbReference>
<dbReference type="SUPFAM" id="SSF51430">
    <property type="entry name" value="NAD(P)-linked oxidoreductase"/>
    <property type="match status" value="1"/>
</dbReference>
<dbReference type="PROSITE" id="PS00062">
    <property type="entry name" value="ALDOKETO_REDUCTASE_2"/>
    <property type="match status" value="1"/>
</dbReference>
<sequence length="365" mass="40576">MALTLSTTKTFTNINCSNNTSNITTFKPLKLPLFWPWQKVKMGPLSVSPMGFGTWAWGNQLLWGYQTSMDDQLQQAFELALENGINLFDTADSYGTGRLNGQSERLLGKFIKESQGLKGKQNEVVVATKFAAYPWRLTSGQFVNACRASLDRLQIDQLGIGQLHWSTASYAPLQELVLWDGLVQMYEKGLVRAVGVSNYGPQQLVKIHDYLKTRGVPLCSAQVQFSLLSMGKEQLEIKSICDELGIRLISYSPLGLGMLTGKYSSSKLPTGPRSLLFRQILPGLEPLLLALSEIAKKRGKTMPQVAINWCICKGTVPIPGIKSVRHVEDNLGALGWKLTNDEQLQLEYAAKESPKSMIQNIFQTR</sequence>
<reference key="1">
    <citation type="journal article" date="1998" name="DNA Res.">
        <title>Structural analysis of Arabidopsis thaliana chromosome 5. VII. Sequence features of the regions of 1,013,767 bp covered by sixteen physically assigned P1 and TAC clones.</title>
        <authorList>
            <person name="Nakamura Y."/>
            <person name="Sato S."/>
            <person name="Asamizu E."/>
            <person name="Kaneko T."/>
            <person name="Kotani H."/>
            <person name="Miyajima N."/>
            <person name="Tabata S."/>
        </authorList>
    </citation>
    <scope>NUCLEOTIDE SEQUENCE [LARGE SCALE GENOMIC DNA]</scope>
    <source>
        <strain>cv. Columbia</strain>
    </source>
</reference>
<reference key="2">
    <citation type="journal article" date="2017" name="Plant J.">
        <title>Araport11: a complete reannotation of the Arabidopsis thaliana reference genome.</title>
        <authorList>
            <person name="Cheng C.Y."/>
            <person name="Krishnakumar V."/>
            <person name="Chan A.P."/>
            <person name="Thibaud-Nissen F."/>
            <person name="Schobel S."/>
            <person name="Town C.D."/>
        </authorList>
    </citation>
    <scope>GENOME REANNOTATION</scope>
    <source>
        <strain>cv. Columbia</strain>
    </source>
</reference>
<reference key="3">
    <citation type="submission" date="2004-05" db="EMBL/GenBank/DDBJ databases">
        <title>Arabidopsis ORF clones.</title>
        <authorList>
            <person name="Cheuk R."/>
            <person name="Chen H."/>
            <person name="Kim C.J."/>
            <person name="Shinn P."/>
            <person name="Carninci P."/>
            <person name="Hayashizaki Y."/>
            <person name="Ishida J."/>
            <person name="Kamiya A."/>
            <person name="Kawai J."/>
            <person name="Narusaka M."/>
            <person name="Sakurai T."/>
            <person name="Satou M."/>
            <person name="Seki M."/>
            <person name="Shinozaki K."/>
            <person name="Ecker J.R."/>
        </authorList>
    </citation>
    <scope>NUCLEOTIDE SEQUENCE [LARGE SCALE MRNA]</scope>
</reference>
<reference key="4">
    <citation type="submission" date="2005-03" db="EMBL/GenBank/DDBJ databases">
        <title>Large-scale analysis of RIKEN Arabidopsis full-length (RAFL) cDNAs.</title>
        <authorList>
            <person name="Totoki Y."/>
            <person name="Seki M."/>
            <person name="Ishida J."/>
            <person name="Nakajima M."/>
            <person name="Enju A."/>
            <person name="Kamiya A."/>
            <person name="Narusaka M."/>
            <person name="Shin-i T."/>
            <person name="Nakagawa M."/>
            <person name="Sakamoto N."/>
            <person name="Oishi K."/>
            <person name="Kohara Y."/>
            <person name="Kobayashi M."/>
            <person name="Toyoda A."/>
            <person name="Sakaki Y."/>
            <person name="Sakurai T."/>
            <person name="Iida K."/>
            <person name="Akiyama K."/>
            <person name="Satou M."/>
            <person name="Toyoda T."/>
            <person name="Konagaya A."/>
            <person name="Carninci P."/>
            <person name="Kawai J."/>
            <person name="Hayashizaki Y."/>
            <person name="Shinozaki K."/>
        </authorList>
    </citation>
    <scope>NUCLEOTIDE SEQUENCE [LARGE SCALE MRNA]</scope>
</reference>
<reference key="5">
    <citation type="journal article" date="2011" name="Plant Mol. Biol.">
        <title>Identification and characterization of a pyridoxal reductase involved in the vitamin B6 salvage pathway in Arabidopsis.</title>
        <authorList>
            <person name="Herrero S."/>
            <person name="Gonzalez E."/>
            <person name="Gillikin J.W."/>
            <person name="Velez H."/>
            <person name="Daub M.E."/>
        </authorList>
    </citation>
    <scope>FUNCTION</scope>
    <scope>CATALYTIC ACTIVITY</scope>
    <scope>BIOPHYSICOCHEMICAL PROPERTIES</scope>
    <scope>TISSUE SPECIFICITY</scope>
</reference>
<evidence type="ECO:0000250" key="1"/>
<evidence type="ECO:0000255" key="2"/>
<evidence type="ECO:0000269" key="3">
    <source>
    </source>
</evidence>
<evidence type="ECO:0000305" key="4"/>
<evidence type="ECO:0000305" key="5">
    <source>
    </source>
</evidence>
<accession>Q56Y42</accession>
<accession>Q6NKP1</accession>
<accession>Q9FJC6</accession>
<protein>
    <recommendedName>
        <fullName>Pyridoxal reductase, chloroplastic</fullName>
        <ecNumber>1.1.1.65</ecNumber>
    </recommendedName>
</protein>
<gene>
    <name type="primary">PLR1</name>
    <name type="ordered locus">At5g53580</name>
    <name type="ORF">MNC6.12</name>
</gene>
<keyword id="KW-0150">Chloroplast</keyword>
<keyword id="KW-0521">NADP</keyword>
<keyword id="KW-0560">Oxidoreductase</keyword>
<keyword id="KW-0934">Plastid</keyword>
<keyword id="KW-1185">Reference proteome</keyword>
<keyword id="KW-0809">Transit peptide</keyword>
<feature type="transit peptide" description="Chloroplast" evidence="2">
    <location>
        <begin position="1"/>
        <end position="15"/>
    </location>
</feature>
<feature type="chain" id="PRO_0000420551" description="Pyridoxal reductase, chloroplastic">
    <location>
        <begin position="16"/>
        <end position="365"/>
    </location>
</feature>
<feature type="active site" description="Proton donor" evidence="1">
    <location>
        <position position="94"/>
    </location>
</feature>
<feature type="sequence conflict" description="In Ref. 3; AAT06472." evidence="4" ref="3">
    <original>W</original>
    <variation>C</variation>
    <location>
        <position position="135"/>
    </location>
</feature>
<proteinExistence type="evidence at protein level"/>
<comment type="function">
    <text evidence="3">Catalyzes the reduction of pyridoxal (PL) with NADPH and oxidation of pyridoxine (PN) with NADP(+). Involved in the PLP salvage pathway.</text>
</comment>
<comment type="catalytic activity">
    <reaction evidence="3">
        <text>pyridoxine + NADP(+) = pyridoxal + NADPH + H(+)</text>
        <dbReference type="Rhea" id="RHEA:16129"/>
        <dbReference type="ChEBI" id="CHEBI:15378"/>
        <dbReference type="ChEBI" id="CHEBI:16709"/>
        <dbReference type="ChEBI" id="CHEBI:17310"/>
        <dbReference type="ChEBI" id="CHEBI:57783"/>
        <dbReference type="ChEBI" id="CHEBI:58349"/>
        <dbReference type="EC" id="1.1.1.65"/>
    </reaction>
</comment>
<comment type="biophysicochemical properties">
    <phDependence>
        <text evidence="3">Optimum pH is 6-7.5 for the reverse reaction.</text>
    </phDependence>
</comment>
<comment type="pathway">
    <text>Cofactor degradation; B6 vitamer degradation; pyridoxal from pyridoxine (dehydrogenase route): step 1/1.</text>
</comment>
<comment type="subunit">
    <text evidence="1">Monomer.</text>
</comment>
<comment type="subcellular location">
    <subcellularLocation>
        <location evidence="4">Plastid</location>
        <location evidence="4">Chloroplast</location>
    </subcellularLocation>
</comment>
<comment type="tissue specificity">
    <text evidence="3">Expressed in cotyledons, embryos, flowers, shoots, roots and seeds.</text>
</comment>
<comment type="miscellaneous">
    <text evidence="5">Mutants with reduced expression of PLR1 have lower levels of total B6 vitamers but there is no reduction in PN or PNP levels.</text>
</comment>
<comment type="similarity">
    <text evidence="4">Belongs to the aldo/keto reductase family.</text>
</comment>
<comment type="sequence caution" evidence="4">
    <conflict type="erroneous gene model prediction">
        <sequence resource="EMBL-CDS" id="BAB09734"/>
    </conflict>
</comment>
<organism>
    <name type="scientific">Arabidopsis thaliana</name>
    <name type="common">Mouse-ear cress</name>
    <dbReference type="NCBI Taxonomy" id="3702"/>
    <lineage>
        <taxon>Eukaryota</taxon>
        <taxon>Viridiplantae</taxon>
        <taxon>Streptophyta</taxon>
        <taxon>Embryophyta</taxon>
        <taxon>Tracheophyta</taxon>
        <taxon>Spermatophyta</taxon>
        <taxon>Magnoliopsida</taxon>
        <taxon>eudicotyledons</taxon>
        <taxon>Gunneridae</taxon>
        <taxon>Pentapetalae</taxon>
        <taxon>rosids</taxon>
        <taxon>malvids</taxon>
        <taxon>Brassicales</taxon>
        <taxon>Brassicaceae</taxon>
        <taxon>Camelineae</taxon>
        <taxon>Arabidopsis</taxon>
    </lineage>
</organism>